<name>TAF9_HUMAN</name>
<gene>
    <name type="primary">TAF9</name>
    <name type="synonym">TAF2G</name>
    <name type="synonym">TAFII31</name>
</gene>
<comment type="function">
    <text evidence="5 7">The TFIID basal transcription factor complex plays a major role in the initiation of RNA polymerase II (Pol II)-dependent transcription (PubMed:33795473). TFIID recognizes and binds promoters with or without a TATA box via its subunit TBP, a TATA-box-binding protein, and promotes assembly of the pre-initiation complex (PIC) (PubMed:33795473). The TFIID complex consists of TBP and TBP-associated factors (TAFs), including TAF1, TAF2, TAF3, TAF4, TAF5, TAF6, TAF7, TAF8, TAF9, TAF10, TAF11, TAF12 and TAF13 (PubMed:33795473). TAF9 is also a component of the TBP-free TAFII complex (TFTC), the PCAF histone acetylase complex and the STAGA transcription coactivator-HAT complex (PubMed:15899866). TAF9 and its paralog TAF9B are involved in transcriptional activation as well as repression of distinct but overlapping sets of genes (PubMed:15899866). Essential for cell viability (PubMed:15899866). May have a role in gene regulation associated with apoptosis (PubMed:15899866).</text>
</comment>
<comment type="subunit">
    <text evidence="3 4 5 6 7 8 9 10 11">Component of the TFIID basal transcription factor complex, composed of TATA-box-binding protein TBP, and a number of TBP-associated factors (TAFs), including TAF1, TAF2, TAF3, TAF4, TAF5, TAF6, TAF7, TAF8, TAF9, TAF10, TAF11, TAF12 and TAF13 (PubMed:33795473). Component of the TATA-binding protein-free TAF complex (TFTC), the PCAF histone acetylase complex and the STAGA transcription coactivator-HAT complex (PubMed:11564863, PubMed:9885574). The PCAF complex consists at least of TADA2L/ADA2, SUPT3H/SPT3, TADA3L/ADA3, TAF5L/PAF65-beta, TAF6L/PAF65-alpha, TAF10/TAFII30, TAF12/TAFII20, TAF9/TAFII31 and TRRAP (PubMed:9674425, PubMed:9885574). The STAGA transcription coactivator-HAT complex consists at least of SUPT3H, GCN5L2, SUPT7L, TAF5L, TAF6L, TADA3L, TAD1L, TAF10, TAF12, TRRAP and TAF9 (PubMed:11564863). Binds N-terminal domain of p53/TP53 which is essential for transcription (PubMed:7761466). Component of some MLL1/MLL complex, at least composed of the core components KMT2A/MLL1, ASH2L, HCFC1/HCF1, WDR5 and RBBP5, as well as the facultative components BACC1, CHD8, E2F6, HSP70, INO80C, KANSL1, LAS1L, MAX, MCRS1, MGA, MYST1/MOF, PELP1, PHF20, PRP31, RING2, RUVB1/TIP49A, RUVB2/TIP49B, SENP3, TAF1, TAF4, TAF6, TAF7, TAF9 and TEX10 (PubMed:15960975). Binds TFIIB and the Herpes simplex virus activator VP16 (PubMed:7761466). Forms a heterodimer with TAF6 in a complex with the TAF4B-TAF12 heterodimer (PubMed:15601843, PubMed:7597030). Also interacts with TAF5 (PubMed:15899866). Binds directly DNA (PubMed:15601843). Increased DNA binding when complexed with TAF6 (PubMed:15601843).</text>
</comment>
<comment type="interaction">
    <interactant intactId="EBI-712521">
        <id>Q16594</id>
    </interactant>
    <interactant intactId="EBI-712941">
        <id>Q14919</id>
        <label>DRAP1</label>
    </interactant>
    <organismsDiffer>false</organismsDiffer>
    <experiments>9</experiments>
</comment>
<comment type="interaction">
    <interactant intactId="EBI-712521">
        <id>Q16594</id>
    </interactant>
    <interactant intactId="EBI-477430">
        <id>Q92831</id>
        <label>KAT2B</label>
    </interactant>
    <organismsDiffer>false</organismsDiffer>
    <experiments>3</experiments>
</comment>
<comment type="interaction">
    <interactant intactId="EBI-712521">
        <id>Q16594</id>
    </interactant>
    <interactant intactId="EBI-358383">
        <id>P52294</id>
        <label>KPNA1</label>
    </interactant>
    <organismsDiffer>false</organismsDiffer>
    <experiments>4</experiments>
</comment>
<comment type="interaction">
    <interactant intactId="EBI-712521">
        <id>Q16594</id>
    </interactant>
    <interactant intactId="EBI-359923">
        <id>O60684</id>
        <label>KPNA6</label>
    </interactant>
    <organismsDiffer>false</organismsDiffer>
    <experiments>4</experiments>
</comment>
<comment type="interaction">
    <interactant intactId="EBI-712521">
        <id>Q16594</id>
    </interactant>
    <interactant intactId="EBI-352783">
        <id>P62263</id>
        <label>RPS14</label>
    </interactant>
    <organismsDiffer>false</organismsDiffer>
    <experiments>4</experiments>
</comment>
<comment type="interaction">
    <interactant intactId="EBI-712521">
        <id>Q16594</id>
    </interactant>
    <interactant intactId="EBI-743984">
        <id>Q9Y6J9</id>
        <label>TAF6L</label>
    </interactant>
    <organismsDiffer>false</organismsDiffer>
    <experiments>11</experiments>
</comment>
<comment type="interaction">
    <interactant intactId="EBI-712521">
        <id>Q16594</id>
    </interactant>
    <interactant intactId="EBI-15761537">
        <id>P46099</id>
        <label>Klf1</label>
    </interactant>
    <organismsDiffer>true</organismsDiffer>
    <experiments>3</experiments>
</comment>
<comment type="subcellular location">
    <subcellularLocation>
        <location evidence="3 10">Nucleus</location>
    </subcellularLocation>
</comment>
<comment type="induction">
    <text evidence="5">6 to 8-fold by apoptotic signals.</text>
</comment>
<comment type="similarity">
    <text evidence="13">Belongs to the TAF9 family.</text>
</comment>
<comment type="caution">
    <text evidence="13">AK6 and TAF9 were initially considered as products of the same gene since they share two exons. However, they are translated from different initiation codons and reading frames and encode unrelated proteins. This arrangement is conserved in some mammalian species.</text>
</comment>
<protein>
    <recommendedName>
        <fullName>Transcription initiation factor TFIID subunit 9</fullName>
    </recommendedName>
    <alternativeName>
        <fullName>RNA polymerase II TBP-associated factor subunit G</fullName>
    </alternativeName>
    <alternativeName>
        <fullName>STAF31/32</fullName>
    </alternativeName>
    <alternativeName>
        <fullName>Transcription initiation factor TFIID 31 kDa subunit</fullName>
        <shortName>TAFII-31</shortName>
        <shortName>TAFII31</shortName>
    </alternativeName>
    <alternativeName>
        <fullName>Transcription initiation factor TFIID 32 kDa subunit</fullName>
        <shortName>TAFII-32</shortName>
        <shortName>TAFII32</shortName>
    </alternativeName>
</protein>
<proteinExistence type="evidence at protein level"/>
<organism>
    <name type="scientific">Homo sapiens</name>
    <name type="common">Human</name>
    <dbReference type="NCBI Taxonomy" id="9606"/>
    <lineage>
        <taxon>Eukaryota</taxon>
        <taxon>Metazoa</taxon>
        <taxon>Chordata</taxon>
        <taxon>Craniata</taxon>
        <taxon>Vertebrata</taxon>
        <taxon>Euteleostomi</taxon>
        <taxon>Mammalia</taxon>
        <taxon>Eutheria</taxon>
        <taxon>Euarchontoglires</taxon>
        <taxon>Primates</taxon>
        <taxon>Haplorrhini</taxon>
        <taxon>Catarrhini</taxon>
        <taxon>Hominidae</taxon>
        <taxon>Homo</taxon>
    </lineage>
</organism>
<dbReference type="EMBL" id="U25112">
    <property type="protein sequence ID" value="AAA91318.1"/>
    <property type="molecule type" value="mRNA"/>
</dbReference>
<dbReference type="EMBL" id="U21858">
    <property type="protein sequence ID" value="AAC50153.1"/>
    <property type="molecule type" value="mRNA"/>
</dbReference>
<dbReference type="EMBL" id="U30504">
    <property type="protein sequence ID" value="AAA84389.1"/>
    <property type="molecule type" value="mRNA"/>
</dbReference>
<dbReference type="EMBL" id="BT019652">
    <property type="protein sequence ID" value="AAV38458.1"/>
    <property type="molecule type" value="mRNA"/>
</dbReference>
<dbReference type="EMBL" id="AY189986">
    <property type="protein sequence ID" value="AAN84793.1"/>
    <property type="molecule type" value="Genomic_DNA"/>
</dbReference>
<dbReference type="EMBL" id="CH471137">
    <property type="protein sequence ID" value="EAW51295.1"/>
    <property type="molecule type" value="Genomic_DNA"/>
</dbReference>
<dbReference type="EMBL" id="CH471137">
    <property type="protein sequence ID" value="EAW51296.1"/>
    <property type="molecule type" value="Genomic_DNA"/>
</dbReference>
<dbReference type="EMBL" id="BC003400">
    <property type="protein sequence ID" value="AAH03400.1"/>
    <property type="molecule type" value="mRNA"/>
</dbReference>
<dbReference type="EMBL" id="BC033320">
    <property type="protein sequence ID" value="AAH33320.1"/>
    <property type="molecule type" value="mRNA"/>
</dbReference>
<dbReference type="CCDS" id="CCDS4002.1"/>
<dbReference type="PIR" id="I39141">
    <property type="entry name" value="I39141"/>
</dbReference>
<dbReference type="RefSeq" id="NP_001015892.1">
    <property type="nucleotide sequence ID" value="NM_001015892.2"/>
</dbReference>
<dbReference type="RefSeq" id="NP_003178.1">
    <property type="nucleotide sequence ID" value="NM_003187.5"/>
</dbReference>
<dbReference type="PDB" id="6F3T">
    <property type="method" value="X-ray"/>
    <property type="resolution" value="2.50 A"/>
    <property type="chains" value="F/H/J/L=5-120"/>
</dbReference>
<dbReference type="PDB" id="6MZC">
    <property type="method" value="EM"/>
    <property type="resolution" value="4.50 A"/>
    <property type="chains" value="M=1-264"/>
</dbReference>
<dbReference type="PDB" id="6MZD">
    <property type="method" value="EM"/>
    <property type="resolution" value="9.80 A"/>
    <property type="chains" value="L=1-264"/>
</dbReference>
<dbReference type="PDB" id="6MZL">
    <property type="method" value="EM"/>
    <property type="resolution" value="23.00 A"/>
    <property type="chains" value="L/M=1-264"/>
</dbReference>
<dbReference type="PDB" id="6MZM">
    <property type="method" value="EM"/>
    <property type="resolution" value="7.50 A"/>
    <property type="chains" value="L=1-264"/>
</dbReference>
<dbReference type="PDB" id="7EDX">
    <property type="method" value="EM"/>
    <property type="resolution" value="4.50 A"/>
    <property type="chains" value="I/i=1-264"/>
</dbReference>
<dbReference type="PDB" id="7EG7">
    <property type="method" value="EM"/>
    <property type="resolution" value="6.20 A"/>
    <property type="chains" value="I/i=1-264"/>
</dbReference>
<dbReference type="PDB" id="7EG8">
    <property type="method" value="EM"/>
    <property type="resolution" value="7.40 A"/>
    <property type="chains" value="I/i=1-264"/>
</dbReference>
<dbReference type="PDB" id="7EG9">
    <property type="method" value="EM"/>
    <property type="resolution" value="3.70 A"/>
    <property type="chains" value="I/i=1-264"/>
</dbReference>
<dbReference type="PDB" id="7EGA">
    <property type="method" value="EM"/>
    <property type="resolution" value="4.10 A"/>
    <property type="chains" value="I/i=1-264"/>
</dbReference>
<dbReference type="PDB" id="7EGB">
    <property type="method" value="EM"/>
    <property type="resolution" value="3.30 A"/>
    <property type="chains" value="I/i=1-264"/>
</dbReference>
<dbReference type="PDB" id="7EGC">
    <property type="method" value="EM"/>
    <property type="resolution" value="3.90 A"/>
    <property type="chains" value="I/i=1-264"/>
</dbReference>
<dbReference type="PDB" id="7EGD">
    <property type="method" value="EM"/>
    <property type="resolution" value="6.75 A"/>
    <property type="chains" value="I/i=1-264"/>
</dbReference>
<dbReference type="PDB" id="7EGE">
    <property type="method" value="EM"/>
    <property type="resolution" value="9.00 A"/>
    <property type="chains" value="I/i=1-264"/>
</dbReference>
<dbReference type="PDB" id="7EGF">
    <property type="method" value="EM"/>
    <property type="resolution" value="3.16 A"/>
    <property type="chains" value="i=1-264"/>
</dbReference>
<dbReference type="PDB" id="7EGG">
    <property type="method" value="EM"/>
    <property type="resolution" value="2.77 A"/>
    <property type="chains" value="I=1-264"/>
</dbReference>
<dbReference type="PDB" id="7EGI">
    <property type="method" value="EM"/>
    <property type="resolution" value="9.82 A"/>
    <property type="chains" value="I/i=1-264"/>
</dbReference>
<dbReference type="PDB" id="7EGJ">
    <property type="method" value="EM"/>
    <property type="resolution" value="8.64 A"/>
    <property type="chains" value="I/i=1-264"/>
</dbReference>
<dbReference type="PDB" id="7ENA">
    <property type="method" value="EM"/>
    <property type="resolution" value="4.07 A"/>
    <property type="chains" value="DI/Di=1-264"/>
</dbReference>
<dbReference type="PDB" id="7ENC">
    <property type="method" value="EM"/>
    <property type="resolution" value="4.13 A"/>
    <property type="chains" value="DI/Di=1-264"/>
</dbReference>
<dbReference type="PDB" id="8GXQ">
    <property type="method" value="EM"/>
    <property type="resolution" value="5.04 A"/>
    <property type="chains" value="DI/Di=1-264"/>
</dbReference>
<dbReference type="PDB" id="8GXS">
    <property type="method" value="EM"/>
    <property type="resolution" value="4.16 A"/>
    <property type="chains" value="DI/Di=1-264"/>
</dbReference>
<dbReference type="PDB" id="8H7G">
    <property type="method" value="EM"/>
    <property type="resolution" value="3.70 A"/>
    <property type="chains" value="M=1-264"/>
</dbReference>
<dbReference type="PDB" id="8WAK">
    <property type="method" value="EM"/>
    <property type="resolution" value="5.47 A"/>
    <property type="chains" value="I/i=1-264"/>
</dbReference>
<dbReference type="PDB" id="8WAL">
    <property type="method" value="EM"/>
    <property type="resolution" value="8.52 A"/>
    <property type="chains" value="I/i=1-264"/>
</dbReference>
<dbReference type="PDB" id="8WAN">
    <property type="method" value="EM"/>
    <property type="resolution" value="6.07 A"/>
    <property type="chains" value="I/i=1-264"/>
</dbReference>
<dbReference type="PDB" id="8WAO">
    <property type="method" value="EM"/>
    <property type="resolution" value="6.40 A"/>
    <property type="chains" value="I/i=1-264"/>
</dbReference>
<dbReference type="PDB" id="8WAP">
    <property type="method" value="EM"/>
    <property type="resolution" value="5.85 A"/>
    <property type="chains" value="I/i=1-264"/>
</dbReference>
<dbReference type="PDB" id="8WAQ">
    <property type="method" value="EM"/>
    <property type="resolution" value="6.29 A"/>
    <property type="chains" value="I/i=1-264"/>
</dbReference>
<dbReference type="PDB" id="8WAR">
    <property type="method" value="EM"/>
    <property type="resolution" value="7.20 A"/>
    <property type="chains" value="I/i=1-264"/>
</dbReference>
<dbReference type="PDB" id="8WAS">
    <property type="method" value="EM"/>
    <property type="resolution" value="6.13 A"/>
    <property type="chains" value="I/i=1-264"/>
</dbReference>
<dbReference type="PDBsum" id="6F3T"/>
<dbReference type="PDBsum" id="6MZC"/>
<dbReference type="PDBsum" id="6MZD"/>
<dbReference type="PDBsum" id="6MZL"/>
<dbReference type="PDBsum" id="6MZM"/>
<dbReference type="PDBsum" id="7EDX"/>
<dbReference type="PDBsum" id="7EG7"/>
<dbReference type="PDBsum" id="7EG8"/>
<dbReference type="PDBsum" id="7EG9"/>
<dbReference type="PDBsum" id="7EGA"/>
<dbReference type="PDBsum" id="7EGB"/>
<dbReference type="PDBsum" id="7EGC"/>
<dbReference type="PDBsum" id="7EGD"/>
<dbReference type="PDBsum" id="7EGE"/>
<dbReference type="PDBsum" id="7EGF"/>
<dbReference type="PDBsum" id="7EGG"/>
<dbReference type="PDBsum" id="7EGI"/>
<dbReference type="PDBsum" id="7EGJ"/>
<dbReference type="PDBsum" id="7ENA"/>
<dbReference type="PDBsum" id="7ENC"/>
<dbReference type="PDBsum" id="8GXQ"/>
<dbReference type="PDBsum" id="8GXS"/>
<dbReference type="PDBsum" id="8H7G"/>
<dbReference type="PDBsum" id="8WAK"/>
<dbReference type="PDBsum" id="8WAL"/>
<dbReference type="PDBsum" id="8WAN"/>
<dbReference type="PDBsum" id="8WAO"/>
<dbReference type="PDBsum" id="8WAP"/>
<dbReference type="PDBsum" id="8WAQ"/>
<dbReference type="PDBsum" id="8WAR"/>
<dbReference type="PDBsum" id="8WAS"/>
<dbReference type="EMDB" id="EMD-31075"/>
<dbReference type="EMDB" id="EMD-31107"/>
<dbReference type="EMDB" id="EMD-31108"/>
<dbReference type="EMDB" id="EMD-31109"/>
<dbReference type="EMDB" id="EMD-31110"/>
<dbReference type="EMDB" id="EMD-31111"/>
<dbReference type="EMDB" id="EMD-31112"/>
<dbReference type="EMDB" id="EMD-31113"/>
<dbReference type="EMDB" id="EMD-31114"/>
<dbReference type="EMDB" id="EMD-31115"/>
<dbReference type="EMDB" id="EMD-31116"/>
<dbReference type="EMDB" id="EMD-31118"/>
<dbReference type="EMDB" id="EMD-31119"/>
<dbReference type="EMDB" id="EMD-31204"/>
<dbReference type="EMDB" id="EMD-31207"/>
<dbReference type="EMDB" id="EMD-34359"/>
<dbReference type="EMDB" id="EMD-34360"/>
<dbReference type="EMDB" id="EMD-34520"/>
<dbReference type="EMDB" id="EMD-37395"/>
<dbReference type="EMDB" id="EMD-37396"/>
<dbReference type="EMDB" id="EMD-37398"/>
<dbReference type="EMDB" id="EMD-37399"/>
<dbReference type="EMDB" id="EMD-37400"/>
<dbReference type="EMDB" id="EMD-37401"/>
<dbReference type="EMDB" id="EMD-37402"/>
<dbReference type="EMDB" id="EMD-37403"/>
<dbReference type="EMDB" id="EMD-9298"/>
<dbReference type="EMDB" id="EMD-9302"/>
<dbReference type="EMDB" id="EMD-9305"/>
<dbReference type="EMDB" id="EMD-9306"/>
<dbReference type="SMR" id="Q16594"/>
<dbReference type="BioGRID" id="112743">
    <property type="interactions" value="178"/>
</dbReference>
<dbReference type="ComplexPortal" id="CPX-6802">
    <property type="entry name" value="SAGA complex, KAT2B variant"/>
</dbReference>
<dbReference type="ComplexPortal" id="CPX-900">
    <property type="entry name" value="SAGA complex, KAT2A variant"/>
</dbReference>
<dbReference type="ComplexPortal" id="CPX-903">
    <property type="entry name" value="TFTC histone acetylation complex"/>
</dbReference>
<dbReference type="ComplexPortal" id="CPX-915">
    <property type="entry name" value="General transcription factor complex TFIID"/>
</dbReference>
<dbReference type="ComplexPortal" id="CPX-930">
    <property type="entry name" value="General transcription factor complex TFIID, TAF4B variant"/>
</dbReference>
<dbReference type="ComplexPortal" id="CPX-989">
    <property type="entry name" value="PCAF histone acetylase complex"/>
</dbReference>
<dbReference type="CORUM" id="Q16594"/>
<dbReference type="DIP" id="DIP-435N"/>
<dbReference type="FunCoup" id="Q16594">
    <property type="interactions" value="1929"/>
</dbReference>
<dbReference type="IntAct" id="Q16594">
    <property type="interactions" value="104"/>
</dbReference>
<dbReference type="MINT" id="Q16594"/>
<dbReference type="STRING" id="9606.ENSP00000370193"/>
<dbReference type="GlyCosmos" id="Q16594">
    <property type="glycosylation" value="6 sites, 2 glycans"/>
</dbReference>
<dbReference type="GlyGen" id="Q16594">
    <property type="glycosylation" value="13 sites, 2 O-linked glycans (13 sites)"/>
</dbReference>
<dbReference type="iPTMnet" id="Q16594"/>
<dbReference type="MetOSite" id="Q16594"/>
<dbReference type="PhosphoSitePlus" id="Q16594"/>
<dbReference type="BioMuta" id="TAF9"/>
<dbReference type="DMDM" id="2498981"/>
<dbReference type="jPOST" id="Q16594"/>
<dbReference type="MassIVE" id="Q16594"/>
<dbReference type="PaxDb" id="9606-ENSP00000370193"/>
<dbReference type="PeptideAtlas" id="Q16594"/>
<dbReference type="ProteomicsDB" id="60938"/>
<dbReference type="Pumba" id="Q16594"/>
<dbReference type="Antibodypedia" id="74350">
    <property type="antibodies" value="131 antibodies from 24 providers"/>
</dbReference>
<dbReference type="DNASU" id="6880"/>
<dbReference type="Ensembl" id="ENST00000217893.10">
    <property type="protein sequence ID" value="ENSP00000217893.7"/>
    <property type="gene ID" value="ENSG00000273841.6"/>
</dbReference>
<dbReference type="Ensembl" id="ENST00000328663.8">
    <property type="protein sequence ID" value="ENSP00000370193.1"/>
    <property type="gene ID" value="ENSG00000273841.6"/>
</dbReference>
<dbReference type="Ensembl" id="ENST00000503245.6">
    <property type="protein sequence ID" value="ENSP00000425944.4"/>
    <property type="gene ID" value="ENSG00000273841.6"/>
</dbReference>
<dbReference type="Ensembl" id="ENST00000504109.6">
    <property type="protein sequence ID" value="ENSP00000426283.2"/>
    <property type="gene ID" value="ENSG00000273841.6"/>
</dbReference>
<dbReference type="Ensembl" id="ENST00000506736.2">
    <property type="protein sequence ID" value="ENSP00000421873.1"/>
    <property type="gene ID" value="ENSG00000273841.6"/>
</dbReference>
<dbReference type="Ensembl" id="ENST00000508954.4">
    <property type="protein sequence ID" value="ENSP00000427617.4"/>
    <property type="gene ID" value="ENSG00000273841.6"/>
</dbReference>
<dbReference type="Ensembl" id="ENST00000509462.6">
    <property type="protein sequence ID" value="ENSP00000427343.4"/>
    <property type="gene ID" value="ENSG00000273841.6"/>
</dbReference>
<dbReference type="Ensembl" id="ENST00000512152.6">
    <property type="protein sequence ID" value="ENSP00000425798.4"/>
    <property type="gene ID" value="ENSG00000273841.6"/>
</dbReference>
<dbReference type="Ensembl" id="ENST00000615404.1">
    <property type="protein sequence ID" value="ENSP00000478935.1"/>
    <property type="gene ID" value="ENSG00000276463.4"/>
</dbReference>
<dbReference type="Ensembl" id="ENST00000616867.1">
    <property type="protein sequence ID" value="ENSP00000477750.1"/>
    <property type="gene ID" value="ENSG00000276463.4"/>
</dbReference>
<dbReference type="Ensembl" id="ENST00000617893.4">
    <property type="protein sequence ID" value="ENSP00000477611.1"/>
    <property type="gene ID" value="ENSG00000276463.4"/>
</dbReference>
<dbReference type="Ensembl" id="ENST00000687836.1">
    <property type="protein sequence ID" value="ENSP00000509753.1"/>
    <property type="gene ID" value="ENSG00000273841.6"/>
</dbReference>
<dbReference type="Ensembl" id="ENST00000688968.1">
    <property type="protein sequence ID" value="ENSP00000510364.1"/>
    <property type="gene ID" value="ENSG00000273841.6"/>
</dbReference>
<dbReference type="Ensembl" id="ENST00000689249.1">
    <property type="protein sequence ID" value="ENSP00000508645.1"/>
    <property type="gene ID" value="ENSG00000273841.6"/>
</dbReference>
<dbReference type="Ensembl" id="ENST00000690749.1">
    <property type="protein sequence ID" value="ENSP00000510605.1"/>
    <property type="gene ID" value="ENSG00000273841.6"/>
</dbReference>
<dbReference type="Ensembl" id="ENST00000691076.1">
    <property type="protein sequence ID" value="ENSP00000509913.1"/>
    <property type="gene ID" value="ENSG00000273841.6"/>
</dbReference>
<dbReference type="Ensembl" id="ENST00000691515.1">
    <property type="protein sequence ID" value="ENSP00000509452.1"/>
    <property type="gene ID" value="ENSG00000273841.6"/>
</dbReference>
<dbReference type="Ensembl" id="ENST00000691555.1">
    <property type="protein sequence ID" value="ENSP00000510101.1"/>
    <property type="gene ID" value="ENSG00000273841.6"/>
</dbReference>
<dbReference type="Ensembl" id="ENST00000693414.1">
    <property type="protein sequence ID" value="ENSP00000509848.1"/>
    <property type="gene ID" value="ENSG00000273841.6"/>
</dbReference>
<dbReference type="GeneID" id="6880"/>
<dbReference type="KEGG" id="hsa:6880"/>
<dbReference type="MANE-Select" id="ENST00000217893.10">
    <property type="protein sequence ID" value="ENSP00000217893.7"/>
    <property type="RefSeq nucleotide sequence ID" value="NM_003187.5"/>
    <property type="RefSeq protein sequence ID" value="NP_003178.1"/>
</dbReference>
<dbReference type="UCSC" id="uc003jwc.2">
    <property type="organism name" value="human"/>
</dbReference>
<dbReference type="AGR" id="HGNC:11542"/>
<dbReference type="CTD" id="6880"/>
<dbReference type="DisGeNET" id="6880"/>
<dbReference type="GeneCards" id="TAF9"/>
<dbReference type="HGNC" id="HGNC:11542">
    <property type="gene designation" value="TAF9"/>
</dbReference>
<dbReference type="HPA" id="ENSG00000273841">
    <property type="expression patterns" value="Low tissue specificity"/>
</dbReference>
<dbReference type="MIM" id="600822">
    <property type="type" value="gene"/>
</dbReference>
<dbReference type="neXtProt" id="NX_Q16594"/>
<dbReference type="OpenTargets" id="ENSG00000273841"/>
<dbReference type="PharmGKB" id="PA36317"/>
<dbReference type="VEuPathDB" id="HostDB:ENSG00000273841"/>
<dbReference type="eggNOG" id="KOG3334">
    <property type="taxonomic scope" value="Eukaryota"/>
</dbReference>
<dbReference type="GeneTree" id="ENSGT00940000155097"/>
<dbReference type="InParanoid" id="Q16594"/>
<dbReference type="OMA" id="IRHNSDH"/>
<dbReference type="OrthoDB" id="341924at2759"/>
<dbReference type="PAN-GO" id="Q16594">
    <property type="GO annotations" value="7 GO annotations based on evolutionary models"/>
</dbReference>
<dbReference type="PhylomeDB" id="Q16594"/>
<dbReference type="TreeFam" id="TF351417"/>
<dbReference type="PathwayCommons" id="Q16594"/>
<dbReference type="Reactome" id="R-HSA-167161">
    <property type="pathway name" value="HIV Transcription Initiation"/>
</dbReference>
<dbReference type="Reactome" id="R-HSA-167162">
    <property type="pathway name" value="RNA Polymerase II HIV Promoter Escape"/>
</dbReference>
<dbReference type="Reactome" id="R-HSA-167172">
    <property type="pathway name" value="Transcription of the HIV genome"/>
</dbReference>
<dbReference type="Reactome" id="R-HSA-3214847">
    <property type="pathway name" value="HATs acetylate histones"/>
</dbReference>
<dbReference type="Reactome" id="R-HSA-674695">
    <property type="pathway name" value="RNA Polymerase II Pre-transcription Events"/>
</dbReference>
<dbReference type="Reactome" id="R-HSA-6804756">
    <property type="pathway name" value="Regulation of TP53 Activity through Phosphorylation"/>
</dbReference>
<dbReference type="Reactome" id="R-HSA-6807505">
    <property type="pathway name" value="RNA polymerase II transcribes snRNA genes"/>
</dbReference>
<dbReference type="Reactome" id="R-HSA-73776">
    <property type="pathway name" value="RNA Polymerase II Promoter Escape"/>
</dbReference>
<dbReference type="Reactome" id="R-HSA-73779">
    <property type="pathway name" value="RNA Polymerase II Transcription Pre-Initiation And Promoter Opening"/>
</dbReference>
<dbReference type="Reactome" id="R-HSA-75953">
    <property type="pathway name" value="RNA Polymerase II Transcription Initiation"/>
</dbReference>
<dbReference type="Reactome" id="R-HSA-76042">
    <property type="pathway name" value="RNA Polymerase II Transcription Initiation And Promoter Clearance"/>
</dbReference>
<dbReference type="SignaLink" id="Q16594"/>
<dbReference type="SIGNOR" id="Q16594"/>
<dbReference type="BioGRID-ORCS" id="6880">
    <property type="hits" value="20 hits in 1119 CRISPR screens"/>
</dbReference>
<dbReference type="GeneWiki" id="TAF9"/>
<dbReference type="GenomeRNAi" id="6880"/>
<dbReference type="Pharos" id="Q16594">
    <property type="development level" value="Tbio"/>
</dbReference>
<dbReference type="PRO" id="PR:Q16594"/>
<dbReference type="Proteomes" id="UP000005640">
    <property type="component" value="Chromosome 5"/>
</dbReference>
<dbReference type="RNAct" id="Q16594">
    <property type="molecule type" value="protein"/>
</dbReference>
<dbReference type="Bgee" id="ENSG00000273841">
    <property type="expression patterns" value="Expressed in left testis and 99 other cell types or tissues"/>
</dbReference>
<dbReference type="ExpressionAtlas" id="Q16594">
    <property type="expression patterns" value="baseline and differential"/>
</dbReference>
<dbReference type="GO" id="GO:0071339">
    <property type="term" value="C:MLL1 complex"/>
    <property type="evidence" value="ECO:0000314"/>
    <property type="project" value="UniProtKB"/>
</dbReference>
<dbReference type="GO" id="GO:0005654">
    <property type="term" value="C:nucleoplasm"/>
    <property type="evidence" value="ECO:0000314"/>
    <property type="project" value="HPA"/>
</dbReference>
<dbReference type="GO" id="GO:0005634">
    <property type="term" value="C:nucleus"/>
    <property type="evidence" value="ECO:0000314"/>
    <property type="project" value="UniProtKB"/>
</dbReference>
<dbReference type="GO" id="GO:0070761">
    <property type="term" value="C:pre-snoRNP complex"/>
    <property type="evidence" value="ECO:0000314"/>
    <property type="project" value="BHF-UCL"/>
</dbReference>
<dbReference type="GO" id="GO:0000124">
    <property type="term" value="C:SAGA complex"/>
    <property type="evidence" value="ECO:0000314"/>
    <property type="project" value="UniProtKB"/>
</dbReference>
<dbReference type="GO" id="GO:0005669">
    <property type="term" value="C:transcription factor TFIID complex"/>
    <property type="evidence" value="ECO:0000314"/>
    <property type="project" value="UniProtKB"/>
</dbReference>
<dbReference type="GO" id="GO:0033276">
    <property type="term" value="C:transcription factor TFTC complex"/>
    <property type="evidence" value="ECO:0000314"/>
    <property type="project" value="UniProtKB"/>
</dbReference>
<dbReference type="GO" id="GO:0051117">
    <property type="term" value="F:ATPase binding"/>
    <property type="evidence" value="ECO:0000353"/>
    <property type="project" value="UniProtKB"/>
</dbReference>
<dbReference type="GO" id="GO:0070742">
    <property type="term" value="F:C2H2 zinc finger domain binding"/>
    <property type="evidence" value="ECO:0000353"/>
    <property type="project" value="BHF-UCL"/>
</dbReference>
<dbReference type="GO" id="GO:0003677">
    <property type="term" value="F:DNA binding"/>
    <property type="evidence" value="ECO:0000314"/>
    <property type="project" value="UniProtKB"/>
</dbReference>
<dbReference type="GO" id="GO:0140297">
    <property type="term" value="F:DNA-binding transcription factor binding"/>
    <property type="evidence" value="ECO:0000353"/>
    <property type="project" value="BHF-UCL"/>
</dbReference>
<dbReference type="GO" id="GO:0002039">
    <property type="term" value="F:p53 binding"/>
    <property type="evidence" value="ECO:0000353"/>
    <property type="project" value="BHF-UCL"/>
</dbReference>
<dbReference type="GO" id="GO:0046982">
    <property type="term" value="F:protein heterodimerization activity"/>
    <property type="evidence" value="ECO:0007669"/>
    <property type="project" value="InterPro"/>
</dbReference>
<dbReference type="GO" id="GO:0016251">
    <property type="term" value="F:RNA polymerase II general transcription initiation factor activity"/>
    <property type="evidence" value="ECO:0000305"/>
    <property type="project" value="ARUK-UCL"/>
</dbReference>
<dbReference type="GO" id="GO:0000976">
    <property type="term" value="F:transcription cis-regulatory region binding"/>
    <property type="evidence" value="ECO:0000314"/>
    <property type="project" value="BHF-UCL"/>
</dbReference>
<dbReference type="GO" id="GO:0003713">
    <property type="term" value="F:transcription coactivator activity"/>
    <property type="evidence" value="ECO:0000314"/>
    <property type="project" value="UniProtKB"/>
</dbReference>
<dbReference type="GO" id="GO:0000492">
    <property type="term" value="P:box C/D snoRNP assembly"/>
    <property type="evidence" value="ECO:0000314"/>
    <property type="project" value="UniProtKB"/>
</dbReference>
<dbReference type="GO" id="GO:0006338">
    <property type="term" value="P:chromatin remodeling"/>
    <property type="evidence" value="ECO:0007669"/>
    <property type="project" value="GOC"/>
</dbReference>
<dbReference type="GO" id="GO:0006974">
    <property type="term" value="P:DNA damage response"/>
    <property type="evidence" value="ECO:0000305"/>
    <property type="project" value="BHF-UCL"/>
</dbReference>
<dbReference type="GO" id="GO:0042789">
    <property type="term" value="P:mRNA transcription by RNA polymerase II"/>
    <property type="evidence" value="ECO:0000314"/>
    <property type="project" value="ComplexPortal"/>
</dbReference>
<dbReference type="GO" id="GO:0043066">
    <property type="term" value="P:negative regulation of apoptotic process"/>
    <property type="evidence" value="ECO:0000315"/>
    <property type="project" value="BHF-UCL"/>
</dbReference>
<dbReference type="GO" id="GO:1902166">
    <property type="term" value="P:negative regulation of intrinsic apoptotic signaling pathway in response to DNA damage by p53 class mediator"/>
    <property type="evidence" value="ECO:0000305"/>
    <property type="project" value="BHF-UCL"/>
</dbReference>
<dbReference type="GO" id="GO:0032435">
    <property type="term" value="P:negative regulation of proteasomal ubiquitin-dependent protein catabolic process"/>
    <property type="evidence" value="ECO:0000314"/>
    <property type="project" value="BHF-UCL"/>
</dbReference>
<dbReference type="GO" id="GO:0045893">
    <property type="term" value="P:positive regulation of DNA-templated transcription"/>
    <property type="evidence" value="ECO:0000303"/>
    <property type="project" value="ComplexPortal"/>
</dbReference>
<dbReference type="GO" id="GO:0060760">
    <property type="term" value="P:positive regulation of response to cytokine stimulus"/>
    <property type="evidence" value="ECO:0000315"/>
    <property type="project" value="BHF-UCL"/>
</dbReference>
<dbReference type="GO" id="GO:0045944">
    <property type="term" value="P:positive regulation of transcription by RNA polymerase II"/>
    <property type="evidence" value="ECO:0000314"/>
    <property type="project" value="BHF-UCL"/>
</dbReference>
<dbReference type="GO" id="GO:0060261">
    <property type="term" value="P:positive regulation of transcription initiation by RNA polymerase II"/>
    <property type="evidence" value="ECO:0000314"/>
    <property type="project" value="ComplexPortal"/>
</dbReference>
<dbReference type="GO" id="GO:0050821">
    <property type="term" value="P:protein stabilization"/>
    <property type="evidence" value="ECO:0000314"/>
    <property type="project" value="BHF-UCL"/>
</dbReference>
<dbReference type="GO" id="GO:0006282">
    <property type="term" value="P:regulation of DNA repair"/>
    <property type="evidence" value="ECO:0000303"/>
    <property type="project" value="ComplexPortal"/>
</dbReference>
<dbReference type="GO" id="GO:0006355">
    <property type="term" value="P:regulation of DNA-templated transcription"/>
    <property type="evidence" value="ECO:0000303"/>
    <property type="project" value="ComplexPortal"/>
</dbReference>
<dbReference type="GO" id="GO:0043484">
    <property type="term" value="P:regulation of RNA splicing"/>
    <property type="evidence" value="ECO:0000303"/>
    <property type="project" value="ComplexPortal"/>
</dbReference>
<dbReference type="GO" id="GO:0006357">
    <property type="term" value="P:regulation of transcription by RNA polymerase II"/>
    <property type="evidence" value="ECO:0000314"/>
    <property type="project" value="ComplexPortal"/>
</dbReference>
<dbReference type="GO" id="GO:0070555">
    <property type="term" value="P:response to interleukin-1"/>
    <property type="evidence" value="ECO:0000315"/>
    <property type="project" value="BHF-UCL"/>
</dbReference>
<dbReference type="GO" id="GO:0051123">
    <property type="term" value="P:RNA polymerase II preinitiation complex assembly"/>
    <property type="evidence" value="ECO:0000353"/>
    <property type="project" value="ComplexPortal"/>
</dbReference>
<dbReference type="CDD" id="cd07979">
    <property type="entry name" value="HFD_TAF9"/>
    <property type="match status" value="1"/>
</dbReference>
<dbReference type="FunFam" id="1.10.20.10:FF:000018">
    <property type="entry name" value="Transcription initiation factor TFIID subunit 9"/>
    <property type="match status" value="1"/>
</dbReference>
<dbReference type="Gene3D" id="1.10.20.10">
    <property type="entry name" value="Histone, subunit A"/>
    <property type="match status" value="1"/>
</dbReference>
<dbReference type="InterPro" id="IPR009072">
    <property type="entry name" value="Histone-fold"/>
</dbReference>
<dbReference type="InterPro" id="IPR003162">
    <property type="entry name" value="TFIID-31"/>
</dbReference>
<dbReference type="InterPro" id="IPR051431">
    <property type="entry name" value="TFIID_subunit_9"/>
</dbReference>
<dbReference type="PANTHER" id="PTHR48068">
    <property type="entry name" value="TAF9 RNA POLYMERASE II, TATA BOX-BINDING PROTEIN (TBP)-ASSOCIATED FACTOR"/>
    <property type="match status" value="1"/>
</dbReference>
<dbReference type="PANTHER" id="PTHR48068:SF3">
    <property type="entry name" value="TRANSCRIPTION INITIATION FACTOR TFIID SUBUNIT 9"/>
    <property type="match status" value="1"/>
</dbReference>
<dbReference type="Pfam" id="PF02291">
    <property type="entry name" value="TFIID-31kDa"/>
    <property type="match status" value="1"/>
</dbReference>
<dbReference type="SUPFAM" id="SSF47113">
    <property type="entry name" value="Histone-fold"/>
    <property type="match status" value="1"/>
</dbReference>
<reference key="1">
    <citation type="journal article" date="1995" name="Proc. Natl. Acad. Sci. U.S.A.">
        <title>Human TAFII31 protein is a transcriptional coactivator of the p53 protein.</title>
        <authorList>
            <person name="Lu H."/>
            <person name="Levine A.J."/>
        </authorList>
    </citation>
    <scope>NUCLEOTIDE SEQUENCE [MRNA]</scope>
    <scope>INTERACTION WITH VP16 AND TFIIB</scope>
</reference>
<reference key="2">
    <citation type="journal article" date="1995" name="Proc. Natl. Acad. Sci. U.S.A.">
        <title>Molecular cloning and expression of the 32-kDa subunit of human TFIID reveals interactions with VP16 and TFIIB that mediate transcriptional activation.</title>
        <authorList>
            <person name="Klemm R.D."/>
            <person name="Goodrich J.A."/>
            <person name="Zhou S."/>
            <person name="Tjian R."/>
        </authorList>
    </citation>
    <scope>NUCLEOTIDE SEQUENCE [MRNA]</scope>
    <scope>INTERACTION WITH TAF6</scope>
</reference>
<reference key="3">
    <citation type="journal article" date="1995" name="Proc. Natl. Acad. Sci. U.S.A.">
        <title>Evolutionary conservation of human TATA-binding-polypeptide-associated factors TAFII31 and TAFII80 and interactions of TAFII80 with other TAFs and with general transcription factors.</title>
        <authorList>
            <person name="Hisatake K."/>
            <person name="Ohta T."/>
            <person name="Takada R."/>
            <person name="Guermah M."/>
            <person name="Horikoshi M."/>
            <person name="Nakatani Y."/>
            <person name="Roeder R.G."/>
        </authorList>
    </citation>
    <scope>NUCLEOTIDE SEQUENCE [MRNA]</scope>
    <source>
        <tissue>Brain</tissue>
    </source>
</reference>
<reference key="4">
    <citation type="submission" date="2004-10" db="EMBL/GenBank/DDBJ databases">
        <title>Cloning of human full-length CDSs in BD Creator(TM) system donor vector.</title>
        <authorList>
            <person name="Kalnine N."/>
            <person name="Chen X."/>
            <person name="Rolfs A."/>
            <person name="Halleck A."/>
            <person name="Hines L."/>
            <person name="Eisenstein S."/>
            <person name="Koundinya M."/>
            <person name="Raphael J."/>
            <person name="Moreira D."/>
            <person name="Kelley T."/>
            <person name="LaBaer J."/>
            <person name="Lin Y."/>
            <person name="Phelan M."/>
            <person name="Farmer A."/>
        </authorList>
    </citation>
    <scope>NUCLEOTIDE SEQUENCE [LARGE SCALE MRNA]</scope>
</reference>
<reference key="5">
    <citation type="submission" date="2002-12" db="EMBL/GenBank/DDBJ databases">
        <authorList>
            <consortium name="NIEHS SNPs program"/>
        </authorList>
    </citation>
    <scope>NUCLEOTIDE SEQUENCE [GENOMIC DNA]</scope>
    <scope>VARIANT MET-6</scope>
</reference>
<reference key="6">
    <citation type="submission" date="2005-09" db="EMBL/GenBank/DDBJ databases">
        <authorList>
            <person name="Mural R.J."/>
            <person name="Istrail S."/>
            <person name="Sutton G.G."/>
            <person name="Florea L."/>
            <person name="Halpern A.L."/>
            <person name="Mobarry C.M."/>
            <person name="Lippert R."/>
            <person name="Walenz B."/>
            <person name="Shatkay H."/>
            <person name="Dew I."/>
            <person name="Miller J.R."/>
            <person name="Flanigan M.J."/>
            <person name="Edwards N.J."/>
            <person name="Bolanos R."/>
            <person name="Fasulo D."/>
            <person name="Halldorsson B.V."/>
            <person name="Hannenhalli S."/>
            <person name="Turner R."/>
            <person name="Yooseph S."/>
            <person name="Lu F."/>
            <person name="Nusskern D.R."/>
            <person name="Shue B.C."/>
            <person name="Zheng X.H."/>
            <person name="Zhong F."/>
            <person name="Delcher A.L."/>
            <person name="Huson D.H."/>
            <person name="Kravitz S.A."/>
            <person name="Mouchard L."/>
            <person name="Reinert K."/>
            <person name="Remington K.A."/>
            <person name="Clark A.G."/>
            <person name="Waterman M.S."/>
            <person name="Eichler E.E."/>
            <person name="Adams M.D."/>
            <person name="Hunkapiller M.W."/>
            <person name="Myers E.W."/>
            <person name="Venter J.C."/>
        </authorList>
    </citation>
    <scope>NUCLEOTIDE SEQUENCE [LARGE SCALE GENOMIC DNA]</scope>
</reference>
<reference key="7">
    <citation type="journal article" date="2004" name="Genome Res.">
        <title>The status, quality, and expansion of the NIH full-length cDNA project: the Mammalian Gene Collection (MGC).</title>
        <authorList>
            <consortium name="The MGC Project Team"/>
        </authorList>
    </citation>
    <scope>NUCLEOTIDE SEQUENCE [LARGE SCALE MRNA]</scope>
    <source>
        <tissue>Placenta</tissue>
        <tissue>Testis</tissue>
    </source>
</reference>
<reference key="8">
    <citation type="journal article" date="1998" name="Cell">
        <title>Histone-like TAFs within the PCAF histone acetylase complex.</title>
        <authorList>
            <person name="Ogryzko V.V."/>
            <person name="Kotani T."/>
            <person name="Zhang X."/>
            <person name="Schiltz R.L."/>
            <person name="Howard T."/>
            <person name="Yang X.-J."/>
            <person name="Howard B.H."/>
            <person name="Qin J."/>
            <person name="Nakatani Y."/>
        </authorList>
    </citation>
    <scope>PROTEIN SEQUENCE OF 25-55; 79-89; 176-200 AND 223-246</scope>
    <scope>SUBUNIT</scope>
    <scope>SUBCELLULAR LOCATION</scope>
    <scope>IDENTIFICATION BY MASS SPECTROMETRY</scope>
</reference>
<reference key="9">
    <citation type="journal article" date="2001" name="Mol. Cell. Biol.">
        <title>Human STAGA complex is a chromatin-acetylating transcription coactivator that interacts with pre-mRNA splicing and DNA damage-binding factors in vivo.</title>
        <authorList>
            <person name="Martinez E."/>
            <person name="Palhan V.B."/>
            <person name="Tjernberg A."/>
            <person name="Lymar E.S."/>
            <person name="Gamper A.M."/>
            <person name="Kundu T.K."/>
            <person name="Chait B.T."/>
            <person name="Roeder R.G."/>
        </authorList>
    </citation>
    <scope>SUBCELLULAR LOCATION</scope>
    <scope>IDENTIFICATION IN THE STAGA COMPLEX WITH SUPT3H; GCN5L2; KIAA0764; TAF5L; TAF6L; TRRAP; TADA3L; TAF10 AND TAF12</scope>
    <scope>IDENTIFICATION BY MASS SPECTROMETRY</scope>
</reference>
<reference key="10">
    <citation type="journal article" date="1998" name="Mol. Cell">
        <title>The 400 kDa subunit of the PCAF histone acetylase complex belongs to the ATM superfamily.</title>
        <authorList>
            <person name="Vassilev A."/>
            <person name="Yamauchi J."/>
            <person name="Kotani T."/>
            <person name="Prives C."/>
            <person name="Avantaggiati M.L."/>
            <person name="Qin J."/>
            <person name="Nakatani Y."/>
        </authorList>
    </citation>
    <scope>IDENTIFICATION IN THE PCAF COMPLEX WITH TADA2L; TADA3L; TAF5L; SUPT3H; TAF6L; TAF10; TAF12 AND TRRAP</scope>
</reference>
<reference key="11">
    <citation type="journal article" date="2005" name="Cell">
        <title>Physical association and coordinate function of the H3 K4 methyltransferase MLL1 and the H4 K16 acetyltransferase MOF.</title>
        <authorList>
            <person name="Dou Y."/>
            <person name="Milne T.A."/>
            <person name="Tackett A.J."/>
            <person name="Smith E.R."/>
            <person name="Fukuda A."/>
            <person name="Wysocka J."/>
            <person name="Allis C.D."/>
            <person name="Chait B.T."/>
            <person name="Hess J.L."/>
            <person name="Roeder R.G."/>
        </authorList>
    </citation>
    <scope>IDENTIFICATION IN THE MLL1/MLL COMPLEX</scope>
</reference>
<reference key="12">
    <citation type="journal article" date="2005" name="J. Biol. Chem.">
        <title>Characterization of hCINAP, a novel coilin-interacting protein encoded by a transcript from the transcription factor TAFIID32 locus.</title>
        <authorList>
            <person name="Santama N."/>
            <person name="Ogg S.C."/>
            <person name="Malekkou A."/>
            <person name="Zographos S.E."/>
            <person name="Weis K."/>
            <person name="Lamond A.I."/>
        </authorList>
    </citation>
    <scope>IDENTIFICATION</scope>
</reference>
<reference key="13">
    <citation type="journal article" date="2005" name="Mol. Cell. Biol.">
        <title>Core promoter binding by histone-like TAF complexes.</title>
        <authorList>
            <person name="Shao H."/>
            <person name="Revach M."/>
            <person name="Moshonov S."/>
            <person name="Tzuman Y."/>
            <person name="Gazit K."/>
            <person name="Albeck S."/>
            <person name="Unger T."/>
            <person name="Dikstein R."/>
        </authorList>
    </citation>
    <scope>INTERACTION WITH TAF6 IN A COMPLEX WITH TAF6; TAF9; TAF12 AND TAF4B</scope>
    <scope>DNA-BINDING</scope>
</reference>
<reference key="14">
    <citation type="journal article" date="2005" name="Mol. Cell. Biol.">
        <title>TAF9b (formerly TAF9L) is a bona fide TAF that has unique and overlapping roles with TAF9.</title>
        <authorList>
            <person name="Frontini M."/>
            <person name="Soutoglou E."/>
            <person name="Argentini M."/>
            <person name="Bole-Feysot C."/>
            <person name="Jost B."/>
            <person name="Scheer E."/>
            <person name="Tora L."/>
        </authorList>
    </citation>
    <scope>FUNCTION</scope>
    <scope>SUBUNIT</scope>
    <scope>INDUCTION</scope>
    <scope>INTERACTION WITH TAF5 AND TAF6</scope>
</reference>
<reference key="15">
    <citation type="journal article" date="2008" name="Proc. Natl. Acad. Sci. U.S.A.">
        <title>A quantitative atlas of mitotic phosphorylation.</title>
        <authorList>
            <person name="Dephoure N."/>
            <person name="Zhou C."/>
            <person name="Villen J."/>
            <person name="Beausoleil S.A."/>
            <person name="Bakalarski C.E."/>
            <person name="Elledge S.J."/>
            <person name="Gygi S.P."/>
        </authorList>
    </citation>
    <scope>PHOSPHORYLATION [LARGE SCALE ANALYSIS] AT THR-161; THR-178 AND SER-181</scope>
    <scope>IDENTIFICATION BY MASS SPECTROMETRY [LARGE SCALE ANALYSIS]</scope>
    <source>
        <tissue>Cervix carcinoma</tissue>
    </source>
</reference>
<reference key="16">
    <citation type="journal article" date="2009" name="Sci. Signal.">
        <title>Quantitative phosphoproteomic analysis of T cell receptor signaling reveals system-wide modulation of protein-protein interactions.</title>
        <authorList>
            <person name="Mayya V."/>
            <person name="Lundgren D.H."/>
            <person name="Hwang S.-I."/>
            <person name="Rezaul K."/>
            <person name="Wu L."/>
            <person name="Eng J.K."/>
            <person name="Rodionov V."/>
            <person name="Han D.K."/>
        </authorList>
    </citation>
    <scope>PHOSPHORYLATION [LARGE SCALE ANALYSIS] AT SER-149; SER-158 AND THR-159</scope>
    <scope>IDENTIFICATION BY MASS SPECTROMETRY [LARGE SCALE ANALYSIS]</scope>
    <source>
        <tissue>Leukemic T-cell</tissue>
    </source>
</reference>
<reference key="17">
    <citation type="journal article" date="2009" name="Science">
        <title>Lysine acetylation targets protein complexes and co-regulates major cellular functions.</title>
        <authorList>
            <person name="Choudhary C."/>
            <person name="Kumar C."/>
            <person name="Gnad F."/>
            <person name="Nielsen M.L."/>
            <person name="Rehman M."/>
            <person name="Walther T.C."/>
            <person name="Olsen J.V."/>
            <person name="Mann M."/>
        </authorList>
    </citation>
    <scope>ACETYLATION [LARGE SCALE ANALYSIS] AT LYS-5</scope>
    <scope>IDENTIFICATION BY MASS SPECTROMETRY [LARGE SCALE ANALYSIS]</scope>
</reference>
<reference key="18">
    <citation type="journal article" date="2010" name="Sci. Signal.">
        <title>Quantitative phosphoproteomics reveals widespread full phosphorylation site occupancy during mitosis.</title>
        <authorList>
            <person name="Olsen J.V."/>
            <person name="Vermeulen M."/>
            <person name="Santamaria A."/>
            <person name="Kumar C."/>
            <person name="Miller M.L."/>
            <person name="Jensen L.J."/>
            <person name="Gnad F."/>
            <person name="Cox J."/>
            <person name="Jensen T.S."/>
            <person name="Nigg E.A."/>
            <person name="Brunak S."/>
            <person name="Mann M."/>
        </authorList>
    </citation>
    <scope>PHOSPHORYLATION [LARGE SCALE ANALYSIS] AT SER-149 AND THR-178</scope>
    <scope>IDENTIFICATION BY MASS SPECTROMETRY [LARGE SCALE ANALYSIS]</scope>
    <source>
        <tissue>Cervix carcinoma</tissue>
    </source>
</reference>
<reference key="19">
    <citation type="journal article" date="2013" name="J. Proteome Res.">
        <title>Toward a comprehensive characterization of a human cancer cell phosphoproteome.</title>
        <authorList>
            <person name="Zhou H."/>
            <person name="Di Palma S."/>
            <person name="Preisinger C."/>
            <person name="Peng M."/>
            <person name="Polat A.N."/>
            <person name="Heck A.J."/>
            <person name="Mohammed S."/>
        </authorList>
    </citation>
    <scope>PHOSPHORYLATION [LARGE SCALE ANALYSIS] AT SER-149; SER-152; THR-178 AND SER-196</scope>
    <scope>IDENTIFICATION BY MASS SPECTROMETRY [LARGE SCALE ANALYSIS]</scope>
    <source>
        <tissue>Cervix carcinoma</tissue>
        <tissue>Erythroleukemia</tissue>
    </source>
</reference>
<reference evidence="14 15 16 17 18 19 20 21 22 23" key="20">
    <citation type="journal article" date="2021" name="Science">
        <title>Structural insights into preinitiation complex assembly on core promoters.</title>
        <authorList>
            <person name="Chen X."/>
            <person name="Qi Y."/>
            <person name="Wu Z."/>
            <person name="Wang X."/>
            <person name="Li J."/>
            <person name="Zhao D."/>
            <person name="Hou H."/>
            <person name="Li Y."/>
            <person name="Yu Z."/>
            <person name="Liu W."/>
            <person name="Wang M."/>
            <person name="Ren Y."/>
            <person name="Li Z."/>
            <person name="Yang H."/>
            <person name="Xu Y."/>
        </authorList>
    </citation>
    <scope>STRUCTURE BY ELECTRON MICROSCOPY (2.77 ANGSTROMS)</scope>
    <scope>FUNCTION</scope>
    <scope>IDENTIFICATION IN THE TFIID COMPLEX</scope>
    <scope>SUBUNIT</scope>
</reference>
<accession>Q16594</accession>
<accession>D3DWA3</accession>
<accession>Q5U0D1</accession>
<accession>Q9BTS1</accession>
<evidence type="ECO:0000250" key="1">
    <source>
        <dbReference type="UniProtKB" id="Q8VI33"/>
    </source>
</evidence>
<evidence type="ECO:0000256" key="2">
    <source>
        <dbReference type="SAM" id="MobiDB-lite"/>
    </source>
</evidence>
<evidence type="ECO:0000269" key="3">
    <source>
    </source>
</evidence>
<evidence type="ECO:0000269" key="4">
    <source>
    </source>
</evidence>
<evidence type="ECO:0000269" key="5">
    <source>
    </source>
</evidence>
<evidence type="ECO:0000269" key="6">
    <source>
    </source>
</evidence>
<evidence type="ECO:0000269" key="7">
    <source>
    </source>
</evidence>
<evidence type="ECO:0000269" key="8">
    <source>
    </source>
</evidence>
<evidence type="ECO:0000269" key="9">
    <source>
    </source>
</evidence>
<evidence type="ECO:0000269" key="10">
    <source>
    </source>
</evidence>
<evidence type="ECO:0000269" key="11">
    <source>
    </source>
</evidence>
<evidence type="ECO:0000269" key="12">
    <source ref="5"/>
</evidence>
<evidence type="ECO:0000305" key="13"/>
<evidence type="ECO:0007744" key="14">
    <source>
        <dbReference type="PDB" id="7EDX"/>
    </source>
</evidence>
<evidence type="ECO:0007744" key="15">
    <source>
        <dbReference type="PDB" id="7EG7"/>
    </source>
</evidence>
<evidence type="ECO:0007744" key="16">
    <source>
        <dbReference type="PDB" id="7EG8"/>
    </source>
</evidence>
<evidence type="ECO:0007744" key="17">
    <source>
        <dbReference type="PDB" id="7EG9"/>
    </source>
</evidence>
<evidence type="ECO:0007744" key="18">
    <source>
        <dbReference type="PDB" id="7EGA"/>
    </source>
</evidence>
<evidence type="ECO:0007744" key="19">
    <source>
        <dbReference type="PDB" id="7EGB"/>
    </source>
</evidence>
<evidence type="ECO:0007744" key="20">
    <source>
        <dbReference type="PDB" id="7EGC"/>
    </source>
</evidence>
<evidence type="ECO:0007744" key="21">
    <source>
        <dbReference type="PDB" id="7EGD"/>
    </source>
</evidence>
<evidence type="ECO:0007744" key="22">
    <source>
        <dbReference type="PDB" id="7EGE"/>
    </source>
</evidence>
<evidence type="ECO:0007744" key="23">
    <source>
        <dbReference type="PDB" id="7EGF"/>
    </source>
</evidence>
<evidence type="ECO:0007744" key="24">
    <source>
    </source>
</evidence>
<evidence type="ECO:0007744" key="25">
    <source>
    </source>
</evidence>
<evidence type="ECO:0007744" key="26">
    <source>
    </source>
</evidence>
<evidence type="ECO:0007744" key="27">
    <source>
    </source>
</evidence>
<evidence type="ECO:0007744" key="28">
    <source>
    </source>
</evidence>
<evidence type="ECO:0007829" key="29">
    <source>
        <dbReference type="PDB" id="6F3T"/>
    </source>
</evidence>
<evidence type="ECO:0007829" key="30">
    <source>
        <dbReference type="PDB" id="7EGG"/>
    </source>
</evidence>
<feature type="chain" id="PRO_0000118888" description="Transcription initiation factor TFIID subunit 9">
    <location>
        <begin position="1"/>
        <end position="264"/>
    </location>
</feature>
<feature type="DNA-binding region">
    <location>
        <begin position="120"/>
        <end position="137"/>
    </location>
</feature>
<feature type="region of interest" description="Disordered" evidence="2">
    <location>
        <begin position="149"/>
        <end position="176"/>
    </location>
</feature>
<feature type="region of interest" description="Disordered" evidence="2">
    <location>
        <begin position="232"/>
        <end position="264"/>
    </location>
</feature>
<feature type="compositionally biased region" description="Polar residues" evidence="2">
    <location>
        <begin position="151"/>
        <end position="176"/>
    </location>
</feature>
<feature type="compositionally biased region" description="Polar residues" evidence="2">
    <location>
        <begin position="232"/>
        <end position="243"/>
    </location>
</feature>
<feature type="compositionally biased region" description="Acidic residues" evidence="2">
    <location>
        <begin position="250"/>
        <end position="264"/>
    </location>
</feature>
<feature type="modified residue" description="N6-acetyllysine" evidence="25">
    <location>
        <position position="5"/>
    </location>
</feature>
<feature type="modified residue" description="Phosphoserine" evidence="26 27 28">
    <location>
        <position position="149"/>
    </location>
</feature>
<feature type="modified residue" description="Phosphoserine" evidence="28">
    <location>
        <position position="152"/>
    </location>
</feature>
<feature type="modified residue" description="Phosphoserine" evidence="1">
    <location>
        <position position="155"/>
    </location>
</feature>
<feature type="modified residue" description="Phosphoserine" evidence="26">
    <location>
        <position position="158"/>
    </location>
</feature>
<feature type="modified residue" description="Phosphothreonine" evidence="26">
    <location>
        <position position="159"/>
    </location>
</feature>
<feature type="modified residue" description="Phosphothreonine" evidence="24">
    <location>
        <position position="161"/>
    </location>
</feature>
<feature type="modified residue" description="Phosphothreonine" evidence="1">
    <location>
        <position position="164"/>
    </location>
</feature>
<feature type="modified residue" description="Phosphothreonine" evidence="24 27 28">
    <location>
        <position position="178"/>
    </location>
</feature>
<feature type="modified residue" description="Phosphoserine" evidence="24">
    <location>
        <position position="181"/>
    </location>
</feature>
<feature type="modified residue" description="Phosphoserine" evidence="28">
    <location>
        <position position="196"/>
    </location>
</feature>
<feature type="sequence variant" id="VAR_016279" description="In dbSNP:rs4252233." evidence="12">
    <original>T</original>
    <variation>M</variation>
    <location>
        <position position="6"/>
    </location>
</feature>
<feature type="sequence variant" id="VAR_052260" description="In dbSNP:rs11542580.">
    <original>Q</original>
    <variation>H</variation>
    <location>
        <position position="210"/>
    </location>
</feature>
<feature type="sequence conflict" description="In Ref. 8; AA sequence." evidence="13" ref="8">
    <original>Y</original>
    <variation>V</variation>
    <location>
        <position position="46"/>
    </location>
</feature>
<feature type="sequence conflict" description="In Ref. 7; AAH03400." evidence="13" ref="7">
    <original>L</original>
    <variation>F</variation>
    <location>
        <position position="225"/>
    </location>
</feature>
<feature type="helix" evidence="29">
    <location>
        <begin position="16"/>
        <end position="25"/>
    </location>
</feature>
<feature type="helix" evidence="29">
    <location>
        <begin position="34"/>
        <end position="60"/>
    </location>
</feature>
<feature type="helix" evidence="29">
    <location>
        <begin position="68"/>
        <end position="81"/>
    </location>
</feature>
<feature type="helix" evidence="29">
    <location>
        <begin position="89"/>
        <end position="100"/>
    </location>
</feature>
<feature type="turn" evidence="30">
    <location>
        <begin position="118"/>
        <end position="120"/>
    </location>
</feature>
<feature type="strand" evidence="30">
    <location>
        <begin position="127"/>
        <end position="129"/>
    </location>
</feature>
<keyword id="KW-0002">3D-structure</keyword>
<keyword id="KW-0007">Acetylation</keyword>
<keyword id="KW-0903">Direct protein sequencing</keyword>
<keyword id="KW-0238">DNA-binding</keyword>
<keyword id="KW-0539">Nucleus</keyword>
<keyword id="KW-0597">Phosphoprotein</keyword>
<keyword id="KW-1267">Proteomics identification</keyword>
<keyword id="KW-1185">Reference proteome</keyword>
<keyword id="KW-0804">Transcription</keyword>
<keyword id="KW-0805">Transcription regulation</keyword>
<sequence length="264" mass="28974">MESGKTASPKSMPKDAQMMAQILKDMGITEYEPRVINQMLEFAFRYVTTILDDAKIYSSHAKKATVDADDVRLAIQCRADQSFTSPPPRDFLLDIARQRNQTPLPLIKPYSGPRLPPDRYCLTAPNYRLKSLQKKASTSAGRITVPRLSVGSVTSRPSTPTLGTPTPQTMSVSTKVGTPMSLTGQRFTVQMPTSQSPAVKASIPATSAVQNVLINPSLIGSKNILITTNMMSSQNTANESSNALKRKREDDDDDDDDDDDYDNL</sequence>